<feature type="chain" id="PRO_1000215010" description="Large ribosomal subunit protein bL17">
    <location>
        <begin position="1"/>
        <end position="120"/>
    </location>
</feature>
<reference key="1">
    <citation type="submission" date="2009-06" db="EMBL/GenBank/DDBJ databases">
        <title>Complete sequence of chromosome of Geopacillus sp. WCH70.</title>
        <authorList>
            <consortium name="US DOE Joint Genome Institute"/>
            <person name="Lucas S."/>
            <person name="Copeland A."/>
            <person name="Lapidus A."/>
            <person name="Glavina del Rio T."/>
            <person name="Dalin E."/>
            <person name="Tice H."/>
            <person name="Bruce D."/>
            <person name="Goodwin L."/>
            <person name="Pitluck S."/>
            <person name="Chertkov O."/>
            <person name="Brettin T."/>
            <person name="Detter J.C."/>
            <person name="Han C."/>
            <person name="Larimer F."/>
            <person name="Land M."/>
            <person name="Hauser L."/>
            <person name="Kyrpides N."/>
            <person name="Mikhailova N."/>
            <person name="Brumm P."/>
            <person name="Mead D.A."/>
            <person name="Richardson P."/>
        </authorList>
    </citation>
    <scope>NUCLEOTIDE SEQUENCE [LARGE SCALE GENOMIC DNA]</scope>
    <source>
        <strain>WCH70</strain>
    </source>
</reference>
<organism>
    <name type="scientific">Geobacillus sp. (strain WCH70)</name>
    <dbReference type="NCBI Taxonomy" id="471223"/>
    <lineage>
        <taxon>Bacteria</taxon>
        <taxon>Bacillati</taxon>
        <taxon>Bacillota</taxon>
        <taxon>Bacilli</taxon>
        <taxon>Bacillales</taxon>
        <taxon>Anoxybacillaceae</taxon>
        <taxon>Geobacillus</taxon>
    </lineage>
</organism>
<keyword id="KW-0687">Ribonucleoprotein</keyword>
<keyword id="KW-0689">Ribosomal protein</keyword>
<evidence type="ECO:0000255" key="1">
    <source>
        <dbReference type="HAMAP-Rule" id="MF_01368"/>
    </source>
</evidence>
<evidence type="ECO:0000305" key="2"/>
<sequence length="120" mass="13568">MSYRKLGRTSAQRKALLRDLATDLIINERIETTEARAKELRSVVEKMITLGKRGDLHARRQAAAFIRKEVANSETGQDALQKLFSDIAPRYQDRQGGYTRIMKLGPRRGDGAPMVIIELV</sequence>
<accession>C5D3U5</accession>
<protein>
    <recommendedName>
        <fullName evidence="1">Large ribosomal subunit protein bL17</fullName>
    </recommendedName>
    <alternativeName>
        <fullName evidence="2">50S ribosomal protein L17</fullName>
    </alternativeName>
</protein>
<proteinExistence type="inferred from homology"/>
<dbReference type="EMBL" id="CP001638">
    <property type="protein sequence ID" value="ACS23079.1"/>
    <property type="molecule type" value="Genomic_DNA"/>
</dbReference>
<dbReference type="SMR" id="C5D3U5"/>
<dbReference type="STRING" id="471223.GWCH70_0139"/>
<dbReference type="KEGG" id="gwc:GWCH70_0139"/>
<dbReference type="eggNOG" id="COG0203">
    <property type="taxonomic scope" value="Bacteria"/>
</dbReference>
<dbReference type="HOGENOM" id="CLU_074407_2_2_9"/>
<dbReference type="OrthoDB" id="9809073at2"/>
<dbReference type="GO" id="GO:0022625">
    <property type="term" value="C:cytosolic large ribosomal subunit"/>
    <property type="evidence" value="ECO:0007669"/>
    <property type="project" value="TreeGrafter"/>
</dbReference>
<dbReference type="GO" id="GO:0003735">
    <property type="term" value="F:structural constituent of ribosome"/>
    <property type="evidence" value="ECO:0007669"/>
    <property type="project" value="InterPro"/>
</dbReference>
<dbReference type="GO" id="GO:0006412">
    <property type="term" value="P:translation"/>
    <property type="evidence" value="ECO:0007669"/>
    <property type="project" value="UniProtKB-UniRule"/>
</dbReference>
<dbReference type="FunFam" id="3.90.1030.10:FF:000002">
    <property type="entry name" value="50S ribosomal protein L17"/>
    <property type="match status" value="1"/>
</dbReference>
<dbReference type="Gene3D" id="3.90.1030.10">
    <property type="entry name" value="Ribosomal protein L17"/>
    <property type="match status" value="1"/>
</dbReference>
<dbReference type="HAMAP" id="MF_01368">
    <property type="entry name" value="Ribosomal_bL17"/>
    <property type="match status" value="1"/>
</dbReference>
<dbReference type="InterPro" id="IPR000456">
    <property type="entry name" value="Ribosomal_bL17"/>
</dbReference>
<dbReference type="InterPro" id="IPR047859">
    <property type="entry name" value="Ribosomal_bL17_CS"/>
</dbReference>
<dbReference type="InterPro" id="IPR036373">
    <property type="entry name" value="Ribosomal_bL17_sf"/>
</dbReference>
<dbReference type="NCBIfam" id="TIGR00059">
    <property type="entry name" value="L17"/>
    <property type="match status" value="1"/>
</dbReference>
<dbReference type="PANTHER" id="PTHR14413:SF16">
    <property type="entry name" value="LARGE RIBOSOMAL SUBUNIT PROTEIN BL17M"/>
    <property type="match status" value="1"/>
</dbReference>
<dbReference type="PANTHER" id="PTHR14413">
    <property type="entry name" value="RIBOSOMAL PROTEIN L17"/>
    <property type="match status" value="1"/>
</dbReference>
<dbReference type="Pfam" id="PF01196">
    <property type="entry name" value="Ribosomal_L17"/>
    <property type="match status" value="1"/>
</dbReference>
<dbReference type="SUPFAM" id="SSF64263">
    <property type="entry name" value="Prokaryotic ribosomal protein L17"/>
    <property type="match status" value="1"/>
</dbReference>
<dbReference type="PROSITE" id="PS01167">
    <property type="entry name" value="RIBOSOMAL_L17"/>
    <property type="match status" value="1"/>
</dbReference>
<comment type="subunit">
    <text evidence="1">Part of the 50S ribosomal subunit. Contacts protein L32.</text>
</comment>
<comment type="similarity">
    <text evidence="1">Belongs to the bacterial ribosomal protein bL17 family.</text>
</comment>
<gene>
    <name evidence="1" type="primary">rplQ</name>
    <name type="ordered locus">GWCH70_0139</name>
</gene>
<name>RL17_GEOSW</name>